<organism>
    <name type="scientific">Haemophilus influenzae (strain ATCC 51907 / DSM 11121 / KW20 / Rd)</name>
    <dbReference type="NCBI Taxonomy" id="71421"/>
    <lineage>
        <taxon>Bacteria</taxon>
        <taxon>Pseudomonadati</taxon>
        <taxon>Pseudomonadota</taxon>
        <taxon>Gammaproteobacteria</taxon>
        <taxon>Pasteurellales</taxon>
        <taxon>Pasteurellaceae</taxon>
        <taxon>Haemophilus</taxon>
    </lineage>
</organism>
<gene>
    <name type="primary">pheS</name>
    <name type="ordered locus">HI_1311</name>
</gene>
<keyword id="KW-0030">Aminoacyl-tRNA synthetase</keyword>
<keyword id="KW-0067">ATP-binding</keyword>
<keyword id="KW-0963">Cytoplasm</keyword>
<keyword id="KW-0436">Ligase</keyword>
<keyword id="KW-0460">Magnesium</keyword>
<keyword id="KW-0479">Metal-binding</keyword>
<keyword id="KW-0547">Nucleotide-binding</keyword>
<keyword id="KW-0648">Protein biosynthesis</keyword>
<keyword id="KW-1185">Reference proteome</keyword>
<comment type="catalytic activity">
    <reaction>
        <text>tRNA(Phe) + L-phenylalanine + ATP = L-phenylalanyl-tRNA(Phe) + AMP + diphosphate + H(+)</text>
        <dbReference type="Rhea" id="RHEA:19413"/>
        <dbReference type="Rhea" id="RHEA-COMP:9668"/>
        <dbReference type="Rhea" id="RHEA-COMP:9699"/>
        <dbReference type="ChEBI" id="CHEBI:15378"/>
        <dbReference type="ChEBI" id="CHEBI:30616"/>
        <dbReference type="ChEBI" id="CHEBI:33019"/>
        <dbReference type="ChEBI" id="CHEBI:58095"/>
        <dbReference type="ChEBI" id="CHEBI:78442"/>
        <dbReference type="ChEBI" id="CHEBI:78531"/>
        <dbReference type="ChEBI" id="CHEBI:456215"/>
        <dbReference type="EC" id="6.1.1.20"/>
    </reaction>
</comment>
<comment type="cofactor">
    <cofactor evidence="1">
        <name>Mg(2+)</name>
        <dbReference type="ChEBI" id="CHEBI:18420"/>
    </cofactor>
    <text evidence="1">Binds 2 magnesium ions per tetramer.</text>
</comment>
<comment type="subunit">
    <text evidence="1">Tetramer of two alpha and two beta subunits.</text>
</comment>
<comment type="subcellular location">
    <subcellularLocation>
        <location evidence="1">Cytoplasm</location>
    </subcellularLocation>
</comment>
<comment type="similarity">
    <text evidence="2">Belongs to the class-II aminoacyl-tRNA synthetase family. Phe-tRNA synthetase alpha subunit type 1 subfamily.</text>
</comment>
<accession>P43819</accession>
<proteinExistence type="inferred from homology"/>
<evidence type="ECO:0000250" key="1"/>
<evidence type="ECO:0000305" key="2"/>
<dbReference type="EC" id="6.1.1.20"/>
<dbReference type="EMBL" id="L42023">
    <property type="protein sequence ID" value="AAC22957.1"/>
    <property type="molecule type" value="Genomic_DNA"/>
</dbReference>
<dbReference type="PIR" id="H64115">
    <property type="entry name" value="H64115"/>
</dbReference>
<dbReference type="RefSeq" id="NP_439462.1">
    <property type="nucleotide sequence ID" value="NC_000907.1"/>
</dbReference>
<dbReference type="SMR" id="P43819"/>
<dbReference type="STRING" id="71421.HI_1311"/>
<dbReference type="BindingDB" id="P43819"/>
<dbReference type="ChEMBL" id="CHEMBL3671"/>
<dbReference type="EnsemblBacteria" id="AAC22957">
    <property type="protein sequence ID" value="AAC22957"/>
    <property type="gene ID" value="HI_1311"/>
</dbReference>
<dbReference type="KEGG" id="hin:HI_1311"/>
<dbReference type="PATRIC" id="fig|71421.8.peg.1363"/>
<dbReference type="eggNOG" id="COG0016">
    <property type="taxonomic scope" value="Bacteria"/>
</dbReference>
<dbReference type="HOGENOM" id="CLU_025086_0_1_6"/>
<dbReference type="OrthoDB" id="9800719at2"/>
<dbReference type="PhylomeDB" id="P43819"/>
<dbReference type="BioCyc" id="HINF71421:G1GJ1-1336-MONOMER"/>
<dbReference type="Proteomes" id="UP000000579">
    <property type="component" value="Chromosome"/>
</dbReference>
<dbReference type="GO" id="GO:0005737">
    <property type="term" value="C:cytoplasm"/>
    <property type="evidence" value="ECO:0000318"/>
    <property type="project" value="GO_Central"/>
</dbReference>
<dbReference type="GO" id="GO:0005524">
    <property type="term" value="F:ATP binding"/>
    <property type="evidence" value="ECO:0007669"/>
    <property type="project" value="UniProtKB-UniRule"/>
</dbReference>
<dbReference type="GO" id="GO:0000287">
    <property type="term" value="F:magnesium ion binding"/>
    <property type="evidence" value="ECO:0007669"/>
    <property type="project" value="UniProtKB-UniRule"/>
</dbReference>
<dbReference type="GO" id="GO:0004826">
    <property type="term" value="F:phenylalanine-tRNA ligase activity"/>
    <property type="evidence" value="ECO:0000318"/>
    <property type="project" value="GO_Central"/>
</dbReference>
<dbReference type="GO" id="GO:0000049">
    <property type="term" value="F:tRNA binding"/>
    <property type="evidence" value="ECO:0007669"/>
    <property type="project" value="InterPro"/>
</dbReference>
<dbReference type="GO" id="GO:0006432">
    <property type="term" value="P:phenylalanyl-tRNA aminoacylation"/>
    <property type="evidence" value="ECO:0000318"/>
    <property type="project" value="GO_Central"/>
</dbReference>
<dbReference type="CDD" id="cd00496">
    <property type="entry name" value="PheRS_alpha_core"/>
    <property type="match status" value="1"/>
</dbReference>
<dbReference type="FunFam" id="3.30.930.10:FF:000003">
    <property type="entry name" value="Phenylalanine--tRNA ligase alpha subunit"/>
    <property type="match status" value="1"/>
</dbReference>
<dbReference type="Gene3D" id="3.30.930.10">
    <property type="entry name" value="Bira Bifunctional Protein, Domain 2"/>
    <property type="match status" value="1"/>
</dbReference>
<dbReference type="HAMAP" id="MF_00281">
    <property type="entry name" value="Phe_tRNA_synth_alpha1"/>
    <property type="match status" value="1"/>
</dbReference>
<dbReference type="InterPro" id="IPR006195">
    <property type="entry name" value="aa-tRNA-synth_II"/>
</dbReference>
<dbReference type="InterPro" id="IPR045864">
    <property type="entry name" value="aa-tRNA-synth_II/BPL/LPL"/>
</dbReference>
<dbReference type="InterPro" id="IPR004529">
    <property type="entry name" value="Phe-tRNA-synth_IIc_asu"/>
</dbReference>
<dbReference type="InterPro" id="IPR004188">
    <property type="entry name" value="Phe-tRNA_ligase_II_N"/>
</dbReference>
<dbReference type="InterPro" id="IPR022911">
    <property type="entry name" value="Phe_tRNA_ligase_alpha1_bac"/>
</dbReference>
<dbReference type="InterPro" id="IPR002319">
    <property type="entry name" value="Phenylalanyl-tRNA_Synthase"/>
</dbReference>
<dbReference type="InterPro" id="IPR010978">
    <property type="entry name" value="tRNA-bd_arm"/>
</dbReference>
<dbReference type="NCBIfam" id="TIGR00468">
    <property type="entry name" value="pheS"/>
    <property type="match status" value="1"/>
</dbReference>
<dbReference type="PANTHER" id="PTHR11538:SF41">
    <property type="entry name" value="PHENYLALANINE--TRNA LIGASE, MITOCHONDRIAL"/>
    <property type="match status" value="1"/>
</dbReference>
<dbReference type="PANTHER" id="PTHR11538">
    <property type="entry name" value="PHENYLALANYL-TRNA SYNTHETASE"/>
    <property type="match status" value="1"/>
</dbReference>
<dbReference type="Pfam" id="PF02912">
    <property type="entry name" value="Phe_tRNA-synt_N"/>
    <property type="match status" value="1"/>
</dbReference>
<dbReference type="Pfam" id="PF01409">
    <property type="entry name" value="tRNA-synt_2d"/>
    <property type="match status" value="1"/>
</dbReference>
<dbReference type="SUPFAM" id="SSF55681">
    <property type="entry name" value="Class II aaRS and biotin synthetases"/>
    <property type="match status" value="1"/>
</dbReference>
<dbReference type="SUPFAM" id="SSF46589">
    <property type="entry name" value="tRNA-binding arm"/>
    <property type="match status" value="1"/>
</dbReference>
<dbReference type="PROSITE" id="PS50862">
    <property type="entry name" value="AA_TRNA_LIGASE_II"/>
    <property type="match status" value="1"/>
</dbReference>
<name>SYFA_HAEIN</name>
<protein>
    <recommendedName>
        <fullName>Phenylalanine--tRNA ligase alpha subunit</fullName>
        <ecNumber>6.1.1.20</ecNumber>
    </recommendedName>
    <alternativeName>
        <fullName>Phenylalanyl-tRNA synthetase alpha subunit</fullName>
        <shortName>PheRS</shortName>
    </alternativeName>
</protein>
<sequence length="329" mass="38080">MQHLNELVEKAKLAIESIQDKSLTALDEIRVEYFGKKGHFTQLMQELRNVSAEERPAMGAKINEAKQAALEFLNAKKTEWEQAELNSKLEKERVDVSLPGRKVETGGLHPVTMTINRVTKFFSELGFSVENGPEIESDYYNFDALNIPKHHPARADHDTFWFNPELLLRTQTSGVQIRTMEKMQPPIRIMAPGRVYRNDYDQTHTPMFHQIELLYVDKKANFTELKGLLHDFLRAFFEEDLQVRFRPSYFPFTEPSAEVDVMGKNGKWLEVLGCGMVHPNVLRNVGIDPNEYSGFAVGMGVERLTMLRYNVTDLRSFFENDLRFLKQFK</sequence>
<feature type="chain" id="PRO_0000126712" description="Phenylalanine--tRNA ligase alpha subunit">
    <location>
        <begin position="1"/>
        <end position="329"/>
    </location>
</feature>
<feature type="binding site" evidence="1">
    <location>
        <position position="254"/>
    </location>
    <ligand>
        <name>Mg(2+)</name>
        <dbReference type="ChEBI" id="CHEBI:18420"/>
        <note>shared with beta subunit</note>
    </ligand>
</feature>
<reference key="1">
    <citation type="journal article" date="1995" name="Science">
        <title>Whole-genome random sequencing and assembly of Haemophilus influenzae Rd.</title>
        <authorList>
            <person name="Fleischmann R.D."/>
            <person name="Adams M.D."/>
            <person name="White O."/>
            <person name="Clayton R.A."/>
            <person name="Kirkness E.F."/>
            <person name="Kerlavage A.R."/>
            <person name="Bult C.J."/>
            <person name="Tomb J.-F."/>
            <person name="Dougherty B.A."/>
            <person name="Merrick J.M."/>
            <person name="McKenney K."/>
            <person name="Sutton G.G."/>
            <person name="FitzHugh W."/>
            <person name="Fields C.A."/>
            <person name="Gocayne J.D."/>
            <person name="Scott J.D."/>
            <person name="Shirley R."/>
            <person name="Liu L.-I."/>
            <person name="Glodek A."/>
            <person name="Kelley J.M."/>
            <person name="Weidman J.F."/>
            <person name="Phillips C.A."/>
            <person name="Spriggs T."/>
            <person name="Hedblom E."/>
            <person name="Cotton M.D."/>
            <person name="Utterback T.R."/>
            <person name="Hanna M.C."/>
            <person name="Nguyen D.T."/>
            <person name="Saudek D.M."/>
            <person name="Brandon R.C."/>
            <person name="Fine L.D."/>
            <person name="Fritchman J.L."/>
            <person name="Fuhrmann J.L."/>
            <person name="Geoghagen N.S.M."/>
            <person name="Gnehm C.L."/>
            <person name="McDonald L.A."/>
            <person name="Small K.V."/>
            <person name="Fraser C.M."/>
            <person name="Smith H.O."/>
            <person name="Venter J.C."/>
        </authorList>
    </citation>
    <scope>NUCLEOTIDE SEQUENCE [LARGE SCALE GENOMIC DNA]</scope>
    <source>
        <strain>ATCC 51907 / DSM 11121 / KW20 / Rd</strain>
    </source>
</reference>